<evidence type="ECO:0000250" key="1"/>
<evidence type="ECO:0000255" key="2"/>
<evidence type="ECO:0000256" key="3">
    <source>
        <dbReference type="SAM" id="MobiDB-lite"/>
    </source>
</evidence>
<evidence type="ECO:0000305" key="4"/>
<proteinExistence type="inferred from homology"/>
<accession>Q4P2U5</accession>
<accession>A0A0D1DVT3</accession>
<keyword id="KW-0158">Chromosome</keyword>
<keyword id="KW-0175">Coiled coil</keyword>
<keyword id="KW-0227">DNA damage</keyword>
<keyword id="KW-0234">DNA repair</keyword>
<keyword id="KW-0235">DNA replication</keyword>
<keyword id="KW-0539">Nucleus</keyword>
<keyword id="KW-1185">Reference proteome</keyword>
<keyword id="KW-0804">Transcription</keyword>
<keyword id="KW-0805">Transcription regulation</keyword>
<gene>
    <name type="primary">SPT16</name>
    <name type="ORF">UMAG_05568</name>
</gene>
<protein>
    <recommendedName>
        <fullName>FACT complex subunit SPT16</fullName>
    </recommendedName>
    <alternativeName>
        <fullName>Facilitates chromatin transcription complex subunit SPT16</fullName>
    </alternativeName>
</protein>
<reference key="1">
    <citation type="journal article" date="2006" name="Nature">
        <title>Insights from the genome of the biotrophic fungal plant pathogen Ustilago maydis.</title>
        <authorList>
            <person name="Kaemper J."/>
            <person name="Kahmann R."/>
            <person name="Boelker M."/>
            <person name="Ma L.-J."/>
            <person name="Brefort T."/>
            <person name="Saville B.J."/>
            <person name="Banuett F."/>
            <person name="Kronstad J.W."/>
            <person name="Gold S.E."/>
            <person name="Mueller O."/>
            <person name="Perlin M.H."/>
            <person name="Woesten H.A.B."/>
            <person name="de Vries R."/>
            <person name="Ruiz-Herrera J."/>
            <person name="Reynaga-Pena C.G."/>
            <person name="Snetselaar K."/>
            <person name="McCann M."/>
            <person name="Perez-Martin J."/>
            <person name="Feldbruegge M."/>
            <person name="Basse C.W."/>
            <person name="Steinberg G."/>
            <person name="Ibeas J.I."/>
            <person name="Holloman W."/>
            <person name="Guzman P."/>
            <person name="Farman M.L."/>
            <person name="Stajich J.E."/>
            <person name="Sentandreu R."/>
            <person name="Gonzalez-Prieto J.M."/>
            <person name="Kennell J.C."/>
            <person name="Molina L."/>
            <person name="Schirawski J."/>
            <person name="Mendoza-Mendoza A."/>
            <person name="Greilinger D."/>
            <person name="Muench K."/>
            <person name="Roessel N."/>
            <person name="Scherer M."/>
            <person name="Vranes M."/>
            <person name="Ladendorf O."/>
            <person name="Vincon V."/>
            <person name="Fuchs U."/>
            <person name="Sandrock B."/>
            <person name="Meng S."/>
            <person name="Ho E.C.H."/>
            <person name="Cahill M.J."/>
            <person name="Boyce K.J."/>
            <person name="Klose J."/>
            <person name="Klosterman S.J."/>
            <person name="Deelstra H.J."/>
            <person name="Ortiz-Castellanos L."/>
            <person name="Li W."/>
            <person name="Sanchez-Alonso P."/>
            <person name="Schreier P.H."/>
            <person name="Haeuser-Hahn I."/>
            <person name="Vaupel M."/>
            <person name="Koopmann E."/>
            <person name="Friedrich G."/>
            <person name="Voss H."/>
            <person name="Schlueter T."/>
            <person name="Margolis J."/>
            <person name="Platt D."/>
            <person name="Swimmer C."/>
            <person name="Gnirke A."/>
            <person name="Chen F."/>
            <person name="Vysotskaia V."/>
            <person name="Mannhaupt G."/>
            <person name="Gueldener U."/>
            <person name="Muensterkoetter M."/>
            <person name="Haase D."/>
            <person name="Oesterheld M."/>
            <person name="Mewes H.-W."/>
            <person name="Mauceli E.W."/>
            <person name="DeCaprio D."/>
            <person name="Wade C.M."/>
            <person name="Butler J."/>
            <person name="Young S.K."/>
            <person name="Jaffe D.B."/>
            <person name="Calvo S.E."/>
            <person name="Nusbaum C."/>
            <person name="Galagan J.E."/>
            <person name="Birren B.W."/>
        </authorList>
    </citation>
    <scope>NUCLEOTIDE SEQUENCE [LARGE SCALE GENOMIC DNA]</scope>
    <source>
        <strain>DSM 14603 / FGSC 9021 / UM521</strain>
    </source>
</reference>
<reference key="2">
    <citation type="submission" date="2014-09" db="EMBL/GenBank/DDBJ databases">
        <authorList>
            <person name="Gueldener U."/>
            <person name="Muensterkoetter M."/>
            <person name="Walter M.C."/>
            <person name="Mannhaupt G."/>
            <person name="Kahmann R."/>
        </authorList>
    </citation>
    <scope>GENOME REANNOTATION</scope>
    <source>
        <strain>DSM 14603 / FGSC 9021 / UM521</strain>
    </source>
</reference>
<feature type="chain" id="PRO_0000245189" description="FACT complex subunit SPT16">
    <location>
        <begin position="1"/>
        <end position="1032"/>
    </location>
</feature>
<feature type="region of interest" description="Disordered" evidence="3">
    <location>
        <begin position="443"/>
        <end position="485"/>
    </location>
</feature>
<feature type="region of interest" description="Disordered" evidence="3">
    <location>
        <begin position="936"/>
        <end position="1032"/>
    </location>
</feature>
<feature type="coiled-coil region" evidence="2">
    <location>
        <begin position="633"/>
        <end position="653"/>
    </location>
</feature>
<feature type="coiled-coil region" evidence="2">
    <location>
        <begin position="778"/>
        <end position="803"/>
    </location>
</feature>
<feature type="coiled-coil region" evidence="2">
    <location>
        <begin position="996"/>
        <end position="1017"/>
    </location>
</feature>
<feature type="compositionally biased region" description="Basic and acidic residues" evidence="3">
    <location>
        <begin position="455"/>
        <end position="464"/>
    </location>
</feature>
<feature type="compositionally biased region" description="Low complexity" evidence="3">
    <location>
        <begin position="938"/>
        <end position="955"/>
    </location>
</feature>
<feature type="compositionally biased region" description="Acidic residues" evidence="3">
    <location>
        <begin position="956"/>
        <end position="1000"/>
    </location>
</feature>
<feature type="compositionally biased region" description="Basic and acidic residues" evidence="3">
    <location>
        <begin position="1001"/>
        <end position="1012"/>
    </location>
</feature>
<sequence>MSEQIQIDTGAFQRRVNKLLSCWKDSSADFEQLNQVDSLLVVMGGQNDDLIYSKTTAIHSWLLGYEFPSTVILFTKDSVTFVTSASKAVHLEPLKRSSTGFNLEILKRSKDEASNRALWDDLVSRIDAQGSKVGCLPKDKPIGKFADEWQSVFEKAQSSKDFKMIDVSASLSAVWATKDDDEIKAIRYASKMSSAVMSGYFENEMSTILDEGKKVTHEQLSERIEGKLDDTKLWKRVKGLEGADLSLADWCYTPIVQSGGEYDLKTSAVSSTKRLQGADGNGGVVIASMGIKYRNYCSNIGRTYLIDPHNSQQKMYAFLHEIQTQLADKHLRAGATCKEIYSKAVEIVRAKDEKLVASFVKNVGFGIGLEFRDSAYVLSAKNNRALQRDMVVNLSVGFQDLDDPNHKGEVYSLLLIDTLRINDNAPATFLTDRVRGTNDMSFFFKDDEEEEEEEERRSPAKPDGKVTPGGKVLRNKNRGAAHDDTAAEKMKLHQKELAKQKQEDGLARFAGEDGEGNASNEKVFKKFESYKRENLLPTKVADLKIMVDHRAQSIILPIYGYAVPFHINTLKNVSKSDEGEYTYLRLNFVTPGQIAGKKEDVPFDDPDATFVRSMSYRSSDSSRFTELFREITELRKSATKREAEEKELADVVEQDKLILTKSRAYTLPEVFPRPAMEGKRVPGDLTIHQNGLRFSSPLRPDQKIDLLFSNMKHLFFQPCDKELIVIVHIHLKSPIMIGKRKAKDIQFYREASDVQFDETGNRKRKYRSGDEDEIELEQEERRRRSQLNKEFKVFAERIAEASEGRVSVDVPYRELGFNGVPFRTNVLLQPTTDCLVHLTDPPFLVITLTDVEIVHLERVQFGLQSFDMVFVFSDFSRAPMHVTSIPTTSLDDVKQWLDSVDICVTEGAVNLNWGAIMKTVNEDPYDFFAEGGWGFLQSGSDDGGSSESESGSEFGSEMDDGQEETDEDSDSGSDFGDSAEDESGSEGFEDESEEGEDWDELERKAARADEKKRRQQGGSDDDEDSGKKGKRR</sequence>
<comment type="function">
    <text evidence="1">Component of the FACT complex, a general chromatin factor that acts to reorganize nucleosomes. The FACT complex is involved in multiple processes that require DNA as a template such as mRNA elongation, DNA replication and DNA repair. During transcription elongation the FACT complex acts as a histone chaperone that both destabilizes and restores nucleosomal structure. It facilitates the passage of RNA polymerase II and transcription by promoting the dissociation of one histone H2A-H2B dimer from the nucleosome, then subsequently promotes the reestablishment of the nucleosome following the passage of RNA polymerase II (By similarity).</text>
</comment>
<comment type="subunit">
    <text evidence="1">Forms a stable heterodimer with POB3. The SPT16-POB3 dimer weakly associates with multiple molecules of NHP6 to form the FACT complex (By similarity).</text>
</comment>
<comment type="subcellular location">
    <subcellularLocation>
        <location evidence="1">Nucleus</location>
    </subcellularLocation>
    <subcellularLocation>
        <location evidence="1">Chromosome</location>
    </subcellularLocation>
</comment>
<comment type="similarity">
    <text evidence="4">Belongs to the peptidase M24 family. SPT16 subfamily.</text>
</comment>
<comment type="caution">
    <text evidence="4">Although related to the peptidase M24 family, this protein lacks conserved active site residues suggesting that it may lack peptidase activity.</text>
</comment>
<dbReference type="EMBL" id="CM003157">
    <property type="protein sequence ID" value="KIS66580.1"/>
    <property type="molecule type" value="Genomic_DNA"/>
</dbReference>
<dbReference type="RefSeq" id="XP_011391874.1">
    <property type="nucleotide sequence ID" value="XM_011393572.1"/>
</dbReference>
<dbReference type="SMR" id="Q4P2U5"/>
<dbReference type="FunCoup" id="Q4P2U5">
    <property type="interactions" value="756"/>
</dbReference>
<dbReference type="STRING" id="237631.Q4P2U5"/>
<dbReference type="EnsemblFungi" id="KIS66580">
    <property type="protein sequence ID" value="KIS66580"/>
    <property type="gene ID" value="UMAG_05568"/>
</dbReference>
<dbReference type="GeneID" id="23565423"/>
<dbReference type="KEGG" id="uma:UMAG_05568"/>
<dbReference type="VEuPathDB" id="FungiDB:UMAG_05568"/>
<dbReference type="eggNOG" id="KOG1189">
    <property type="taxonomic scope" value="Eukaryota"/>
</dbReference>
<dbReference type="HOGENOM" id="CLU_004627_1_0_1"/>
<dbReference type="InParanoid" id="Q4P2U5"/>
<dbReference type="OMA" id="YHINTIP"/>
<dbReference type="OrthoDB" id="10251642at2759"/>
<dbReference type="Proteomes" id="UP000000561">
    <property type="component" value="Chromosome 18"/>
</dbReference>
<dbReference type="GO" id="GO:0035101">
    <property type="term" value="C:FACT complex"/>
    <property type="evidence" value="ECO:0000318"/>
    <property type="project" value="GO_Central"/>
</dbReference>
<dbReference type="GO" id="GO:0042393">
    <property type="term" value="F:histone binding"/>
    <property type="evidence" value="ECO:0007669"/>
    <property type="project" value="EnsemblFungi"/>
</dbReference>
<dbReference type="GO" id="GO:0140713">
    <property type="term" value="F:histone chaperone activity"/>
    <property type="evidence" value="ECO:0007669"/>
    <property type="project" value="EnsemblFungi"/>
</dbReference>
<dbReference type="GO" id="GO:0031491">
    <property type="term" value="F:nucleosome binding"/>
    <property type="evidence" value="ECO:0000318"/>
    <property type="project" value="GO_Central"/>
</dbReference>
<dbReference type="GO" id="GO:0140719">
    <property type="term" value="P:constitutive heterochromatin formation"/>
    <property type="evidence" value="ECO:0007669"/>
    <property type="project" value="EnsemblFungi"/>
</dbReference>
<dbReference type="GO" id="GO:0006281">
    <property type="term" value="P:DNA repair"/>
    <property type="evidence" value="ECO:0007669"/>
    <property type="project" value="UniProtKB-KW"/>
</dbReference>
<dbReference type="GO" id="GO:0006261">
    <property type="term" value="P:DNA-templated DNA replication"/>
    <property type="evidence" value="ECO:0007669"/>
    <property type="project" value="EnsemblFungi"/>
</dbReference>
<dbReference type="GO" id="GO:0006334">
    <property type="term" value="P:nucleosome assembly"/>
    <property type="evidence" value="ECO:0007669"/>
    <property type="project" value="EnsemblFungi"/>
</dbReference>
<dbReference type="GO" id="GO:0045899">
    <property type="term" value="P:positive regulation of RNA polymerase II transcription preinitiation complex assembly"/>
    <property type="evidence" value="ECO:0007669"/>
    <property type="project" value="EnsemblFungi"/>
</dbReference>
<dbReference type="GO" id="GO:0007063">
    <property type="term" value="P:regulation of sister chromatid cohesion"/>
    <property type="evidence" value="ECO:0007669"/>
    <property type="project" value="EnsemblFungi"/>
</dbReference>
<dbReference type="GO" id="GO:0006368">
    <property type="term" value="P:transcription elongation by RNA polymerase II"/>
    <property type="evidence" value="ECO:0000318"/>
    <property type="project" value="GO_Central"/>
</dbReference>
<dbReference type="FunFam" id="2.30.29.150:FF:000002">
    <property type="entry name" value="FACT complex subunit SPT16"/>
    <property type="match status" value="1"/>
</dbReference>
<dbReference type="FunFam" id="2.30.29.30:FF:000017">
    <property type="entry name" value="FACT complex subunit SPT16"/>
    <property type="match status" value="1"/>
</dbReference>
<dbReference type="FunFam" id="3.40.350.10:FF:000006">
    <property type="entry name" value="FACT complex subunit SPT16"/>
    <property type="match status" value="1"/>
</dbReference>
<dbReference type="FunFam" id="2.30.29.210:FF:000001">
    <property type="entry name" value="FACT complex subunit spt16"/>
    <property type="match status" value="1"/>
</dbReference>
<dbReference type="FunFam" id="3.90.230.10:FF:000005">
    <property type="entry name" value="FACT complex subunit spt16"/>
    <property type="match status" value="1"/>
</dbReference>
<dbReference type="Gene3D" id="2.30.29.150">
    <property type="match status" value="1"/>
</dbReference>
<dbReference type="Gene3D" id="3.90.230.10">
    <property type="entry name" value="Creatinase/methionine aminopeptidase superfamily"/>
    <property type="match status" value="1"/>
</dbReference>
<dbReference type="Gene3D" id="3.40.350.10">
    <property type="entry name" value="Creatinase/prolidase N-terminal domain"/>
    <property type="match status" value="1"/>
</dbReference>
<dbReference type="Gene3D" id="2.30.29.210">
    <property type="entry name" value="FACT complex subunit Spt16p/Cdc68p"/>
    <property type="match status" value="1"/>
</dbReference>
<dbReference type="Gene3D" id="2.30.29.30">
    <property type="entry name" value="Pleckstrin-homology domain (PH domain)/Phosphotyrosine-binding domain (PTB)"/>
    <property type="match status" value="1"/>
</dbReference>
<dbReference type="InterPro" id="IPR029149">
    <property type="entry name" value="Creatin/AminoP/Spt16_N"/>
</dbReference>
<dbReference type="InterPro" id="IPR036005">
    <property type="entry name" value="Creatinase/aminopeptidase-like"/>
</dbReference>
<dbReference type="InterPro" id="IPR029148">
    <property type="entry name" value="FACT-SPT16_Nlobe"/>
</dbReference>
<dbReference type="InterPro" id="IPR056595">
    <property type="entry name" value="Fact-SPT16_PH"/>
</dbReference>
<dbReference type="InterPro" id="IPR048969">
    <property type="entry name" value="FACT_SPT16_C"/>
</dbReference>
<dbReference type="InterPro" id="IPR013953">
    <property type="entry name" value="FACT_SPT16_M"/>
</dbReference>
<dbReference type="InterPro" id="IPR000994">
    <property type="entry name" value="Pept_M24"/>
</dbReference>
<dbReference type="InterPro" id="IPR011993">
    <property type="entry name" value="PH-like_dom_sf"/>
</dbReference>
<dbReference type="InterPro" id="IPR013719">
    <property type="entry name" value="RTT106/SPT16-like_middle_dom"/>
</dbReference>
<dbReference type="InterPro" id="IPR040258">
    <property type="entry name" value="Spt16"/>
</dbReference>
<dbReference type="PANTHER" id="PTHR13980">
    <property type="entry name" value="CDC68 RELATED"/>
    <property type="match status" value="1"/>
</dbReference>
<dbReference type="PANTHER" id="PTHR13980:SF15">
    <property type="entry name" value="FACT COMPLEX SUBUNIT SPT16"/>
    <property type="match status" value="1"/>
</dbReference>
<dbReference type="Pfam" id="PF14826">
    <property type="entry name" value="FACT-Spt16_Nlob"/>
    <property type="match status" value="1"/>
</dbReference>
<dbReference type="Pfam" id="PF00557">
    <property type="entry name" value="Peptidase_M24"/>
    <property type="match status" value="1"/>
</dbReference>
<dbReference type="Pfam" id="PF24824">
    <property type="entry name" value="PH_SPT16"/>
    <property type="match status" value="1"/>
</dbReference>
<dbReference type="Pfam" id="PF08512">
    <property type="entry name" value="Rttp106-like_middle"/>
    <property type="match status" value="1"/>
</dbReference>
<dbReference type="Pfam" id="PF08644">
    <property type="entry name" value="SPT16"/>
    <property type="match status" value="1"/>
</dbReference>
<dbReference type="Pfam" id="PF21091">
    <property type="entry name" value="SPT16_C"/>
    <property type="match status" value="1"/>
</dbReference>
<dbReference type="SMART" id="SM01285">
    <property type="entry name" value="FACT-Spt16_Nlob"/>
    <property type="match status" value="1"/>
</dbReference>
<dbReference type="SMART" id="SM01287">
    <property type="entry name" value="Rtt106"/>
    <property type="match status" value="1"/>
</dbReference>
<dbReference type="SMART" id="SM01286">
    <property type="entry name" value="SPT16"/>
    <property type="match status" value="1"/>
</dbReference>
<dbReference type="SUPFAM" id="SSF55920">
    <property type="entry name" value="Creatinase/aminopeptidase"/>
    <property type="match status" value="1"/>
</dbReference>
<name>SPT16_MYCMD</name>
<organism>
    <name type="scientific">Mycosarcoma maydis</name>
    <name type="common">Corn smut fungus</name>
    <name type="synonym">Ustilago maydis</name>
    <dbReference type="NCBI Taxonomy" id="5270"/>
    <lineage>
        <taxon>Eukaryota</taxon>
        <taxon>Fungi</taxon>
        <taxon>Dikarya</taxon>
        <taxon>Basidiomycota</taxon>
        <taxon>Ustilaginomycotina</taxon>
        <taxon>Ustilaginomycetes</taxon>
        <taxon>Ustilaginales</taxon>
        <taxon>Ustilaginaceae</taxon>
        <taxon>Mycosarcoma</taxon>
    </lineage>
</organism>